<organism>
    <name type="scientific">Candida glabrata (strain ATCC 2001 / BCRC 20586 / JCM 3761 / NBRC 0622 / NRRL Y-65 / CBS 138)</name>
    <name type="common">Yeast</name>
    <name type="synonym">Nakaseomyces glabratus</name>
    <dbReference type="NCBI Taxonomy" id="284593"/>
    <lineage>
        <taxon>Eukaryota</taxon>
        <taxon>Fungi</taxon>
        <taxon>Dikarya</taxon>
        <taxon>Ascomycota</taxon>
        <taxon>Saccharomycotina</taxon>
        <taxon>Saccharomycetes</taxon>
        <taxon>Saccharomycetales</taxon>
        <taxon>Saccharomycetaceae</taxon>
        <taxon>Nakaseomyces</taxon>
    </lineage>
</organism>
<dbReference type="EMBL" id="CR380956">
    <property type="protein sequence ID" value="CAG60873.1"/>
    <property type="molecule type" value="Genomic_DNA"/>
</dbReference>
<dbReference type="RefSeq" id="XP_447924.1">
    <property type="nucleotide sequence ID" value="XM_447924.1"/>
</dbReference>
<dbReference type="SMR" id="Q6FPC0"/>
<dbReference type="FunCoup" id="Q6FPC0">
    <property type="interactions" value="29"/>
</dbReference>
<dbReference type="STRING" id="284593.Q6FPC0"/>
<dbReference type="EnsemblFungi" id="CAGL0J05016g-T">
    <property type="protein sequence ID" value="CAGL0J05016g-T-p1"/>
    <property type="gene ID" value="CAGL0J05016g"/>
</dbReference>
<dbReference type="GeneID" id="2889566"/>
<dbReference type="KEGG" id="cgr:2889566"/>
<dbReference type="CGD" id="CAL0133350">
    <property type="gene designation" value="TIM54"/>
</dbReference>
<dbReference type="VEuPathDB" id="FungiDB:CAGL0J05016g"/>
<dbReference type="eggNOG" id="ENOG502QPMQ">
    <property type="taxonomic scope" value="Eukaryota"/>
</dbReference>
<dbReference type="HOGENOM" id="CLU_039097_0_0_1"/>
<dbReference type="InParanoid" id="Q6FPC0"/>
<dbReference type="OMA" id="RNWMIFF"/>
<dbReference type="Proteomes" id="UP000002428">
    <property type="component" value="Chromosome J"/>
</dbReference>
<dbReference type="GO" id="GO:0042721">
    <property type="term" value="C:TIM22 mitochondrial import inner membrane insertion complex"/>
    <property type="evidence" value="ECO:0007669"/>
    <property type="project" value="EnsemblFungi"/>
</dbReference>
<dbReference type="GO" id="GO:0008320">
    <property type="term" value="F:protein transmembrane transporter activity"/>
    <property type="evidence" value="ECO:0007669"/>
    <property type="project" value="EnsemblFungi"/>
</dbReference>
<dbReference type="GO" id="GO:0045039">
    <property type="term" value="P:protein insertion into mitochondrial inner membrane"/>
    <property type="evidence" value="ECO:0007669"/>
    <property type="project" value="EnsemblFungi"/>
</dbReference>
<dbReference type="InterPro" id="IPR050187">
    <property type="entry name" value="Lipid_Phosphate_FormReg"/>
</dbReference>
<dbReference type="InterPro" id="IPR021056">
    <property type="entry name" value="Mt_import_IM_translocase_Tim54"/>
</dbReference>
<dbReference type="PANTHER" id="PTHR12358:SF101">
    <property type="entry name" value="MITOCHONDRIAL IMPORT INNER MEMBRANE TRANSLOCASE SUBUNIT TIM54"/>
    <property type="match status" value="1"/>
</dbReference>
<dbReference type="PANTHER" id="PTHR12358">
    <property type="entry name" value="SPHINGOSINE KINASE"/>
    <property type="match status" value="1"/>
</dbReference>
<dbReference type="Pfam" id="PF11711">
    <property type="entry name" value="Tim54"/>
    <property type="match status" value="1"/>
</dbReference>
<gene>
    <name type="primary">TIM54</name>
    <name type="ordered locus">CAGL0J05016g</name>
</gene>
<comment type="function">
    <text evidence="1">Essential component of the TIM22 complex, a complex that mediates the import and insertion of multi-pass transmembrane proteins into the mitochondrial inner membrane. The TIM22 complex forms a twin-pore translocase that uses the membrane potential as external driving force (By similarity).</text>
</comment>
<comment type="subunit">
    <text evidence="1">Component of the TIM22 complex, whose core is composed of TIM22 and TIM54, associated with the 70 kDa heterohexamer composed of TIM9 and TIM10 (or TIM8 and TIM13).</text>
</comment>
<comment type="subcellular location">
    <subcellularLocation>
        <location evidence="1">Mitochondrion inner membrane</location>
        <topology evidence="1">Single-pass membrane protein</topology>
    </subcellularLocation>
</comment>
<comment type="similarity">
    <text evidence="4">Belongs to the TIM54 family.</text>
</comment>
<keyword id="KW-0472">Membrane</keyword>
<keyword id="KW-0496">Mitochondrion</keyword>
<keyword id="KW-0999">Mitochondrion inner membrane</keyword>
<keyword id="KW-0653">Protein transport</keyword>
<keyword id="KW-1185">Reference proteome</keyword>
<keyword id="KW-0811">Translocation</keyword>
<keyword id="KW-0812">Transmembrane</keyword>
<keyword id="KW-1133">Transmembrane helix</keyword>
<keyword id="KW-0813">Transport</keyword>
<feature type="chain" id="PRO_0000228013" description="Mitochondrial import inner membrane translocase subunit TIM54">
    <location>
        <begin position="1"/>
        <end position="452"/>
    </location>
</feature>
<feature type="topological domain" description="Mitochondrial matrix" evidence="2">
    <location>
        <begin position="1"/>
        <end position="19"/>
    </location>
</feature>
<feature type="transmembrane region" description="Helical" evidence="2">
    <location>
        <begin position="20"/>
        <end position="36"/>
    </location>
</feature>
<feature type="topological domain" description="Mitochondrial intermembrane" evidence="2">
    <location>
        <begin position="37"/>
        <end position="452"/>
    </location>
</feature>
<feature type="region of interest" description="Disordered" evidence="3">
    <location>
        <begin position="271"/>
        <end position="299"/>
    </location>
</feature>
<feature type="compositionally biased region" description="Basic and acidic residues" evidence="3">
    <location>
        <begin position="274"/>
        <end position="285"/>
    </location>
</feature>
<feature type="compositionally biased region" description="Acidic residues" evidence="3">
    <location>
        <begin position="286"/>
        <end position="296"/>
    </location>
</feature>
<sequence length="452" mass="51732">MNPALKALGLGNFKLPSRNWTIFWTVLAGSLGGVGYDKYQQRQIISRYCDEVKPLSLQHCDVNKSPRKITVFIAPPPNDYLETSLKIWRRYIKPVLYYAGLDYEVIEEDRQGIIRSEVASRIRQLRRELLEADNEQQGNSGDSLLSIFKKPHAKDPEEEQKFDPEQARQFKADFDFRNVMGIYTKVPKLDTIVQTDSLVADPVLAGGVVCVGRGAYKEYITGLHEGLLGPLDPPEETTQEVEMGSKLKSMNDGDNVETTVETAVETMVETTLESADKVEVEGKDTENEEGKDEPDEEKSRVLKPYLLRTAFHDTPIPPEVEPVLEKDALLKDPKTNVPSLLHQPVLVIPVPNLIGFLTIPERIYRFYQRRFFVDEVCREASNLVKQEHIVKYEPDKHINLALEEESDWPKQWVKTGIEKNSEWTQELVQDQRVVSKMHVFELPKHTTKDTKE</sequence>
<proteinExistence type="inferred from homology"/>
<evidence type="ECO:0000250" key="1"/>
<evidence type="ECO:0000255" key="2"/>
<evidence type="ECO:0000256" key="3">
    <source>
        <dbReference type="SAM" id="MobiDB-lite"/>
    </source>
</evidence>
<evidence type="ECO:0000305" key="4"/>
<accession>Q6FPC0</accession>
<protein>
    <recommendedName>
        <fullName>Mitochondrial import inner membrane translocase subunit TIM54</fullName>
    </recommendedName>
</protein>
<name>TIM54_CANGA</name>
<reference key="1">
    <citation type="journal article" date="2004" name="Nature">
        <title>Genome evolution in yeasts.</title>
        <authorList>
            <person name="Dujon B."/>
            <person name="Sherman D."/>
            <person name="Fischer G."/>
            <person name="Durrens P."/>
            <person name="Casaregola S."/>
            <person name="Lafontaine I."/>
            <person name="de Montigny J."/>
            <person name="Marck C."/>
            <person name="Neuveglise C."/>
            <person name="Talla E."/>
            <person name="Goffard N."/>
            <person name="Frangeul L."/>
            <person name="Aigle M."/>
            <person name="Anthouard V."/>
            <person name="Babour A."/>
            <person name="Barbe V."/>
            <person name="Barnay S."/>
            <person name="Blanchin S."/>
            <person name="Beckerich J.-M."/>
            <person name="Beyne E."/>
            <person name="Bleykasten C."/>
            <person name="Boisrame A."/>
            <person name="Boyer J."/>
            <person name="Cattolico L."/>
            <person name="Confanioleri F."/>
            <person name="de Daruvar A."/>
            <person name="Despons L."/>
            <person name="Fabre E."/>
            <person name="Fairhead C."/>
            <person name="Ferry-Dumazet H."/>
            <person name="Groppi A."/>
            <person name="Hantraye F."/>
            <person name="Hennequin C."/>
            <person name="Jauniaux N."/>
            <person name="Joyet P."/>
            <person name="Kachouri R."/>
            <person name="Kerrest A."/>
            <person name="Koszul R."/>
            <person name="Lemaire M."/>
            <person name="Lesur I."/>
            <person name="Ma L."/>
            <person name="Muller H."/>
            <person name="Nicaud J.-M."/>
            <person name="Nikolski M."/>
            <person name="Oztas S."/>
            <person name="Ozier-Kalogeropoulos O."/>
            <person name="Pellenz S."/>
            <person name="Potier S."/>
            <person name="Richard G.-F."/>
            <person name="Straub M.-L."/>
            <person name="Suleau A."/>
            <person name="Swennen D."/>
            <person name="Tekaia F."/>
            <person name="Wesolowski-Louvel M."/>
            <person name="Westhof E."/>
            <person name="Wirth B."/>
            <person name="Zeniou-Meyer M."/>
            <person name="Zivanovic Y."/>
            <person name="Bolotin-Fukuhara M."/>
            <person name="Thierry A."/>
            <person name="Bouchier C."/>
            <person name="Caudron B."/>
            <person name="Scarpelli C."/>
            <person name="Gaillardin C."/>
            <person name="Weissenbach J."/>
            <person name="Wincker P."/>
            <person name="Souciet J.-L."/>
        </authorList>
    </citation>
    <scope>NUCLEOTIDE SEQUENCE [LARGE SCALE GENOMIC DNA]</scope>
    <source>
        <strain>ATCC 2001 / BCRC 20586 / JCM 3761 / NBRC 0622 / NRRL Y-65 / CBS 138</strain>
    </source>
</reference>